<sequence>MSGTLALTETLIGRASVTPDDQNCQHLLVERLSAIGFECETIESNGVTNLWAVKRGAAGKEGKLLAFAGHTDVVPTGPAEQWSSAPFEPTHRDGKLYGRGAADMKASIAGFVVASEEFVAAHPQHRGSLALLITSDEEGPATDGTVKVVDALEARGERMDYCVVGEPTSSVRFGDMVKNGRRGSMSGKLTVKGVQGHIAYPHLAKNPVHLLAPALAELVAEHWDEGNEYFPPTTWQVSNLHSGTGATNIIPGHAEVMFNFRFSTASTVEGLQSRVHQILDKQGLDYDLTWTVSGLPFLTPRGELSNALEKAIYDETGIATELSTTGGTSDGRFIARICKQVIEFGPLNASIHKIDEHIEVAHIEPLKNVYRRVLEQLIA</sequence>
<proteinExistence type="inferred from homology"/>
<reference key="1">
    <citation type="journal article" date="2014" name="Stand. Genomic Sci.">
        <title>Complete genome sequence of Burkholderia phymatum STM815(T), a broad host range and efficient nitrogen-fixing symbiont of Mimosa species.</title>
        <authorList>
            <person name="Moulin L."/>
            <person name="Klonowska A."/>
            <person name="Caroline B."/>
            <person name="Booth K."/>
            <person name="Vriezen J.A."/>
            <person name="Melkonian R."/>
            <person name="James E.K."/>
            <person name="Young J.P."/>
            <person name="Bena G."/>
            <person name="Hauser L."/>
            <person name="Land M."/>
            <person name="Kyrpides N."/>
            <person name="Bruce D."/>
            <person name="Chain P."/>
            <person name="Copeland A."/>
            <person name="Pitluck S."/>
            <person name="Woyke T."/>
            <person name="Lizotte-Waniewski M."/>
            <person name="Bristow J."/>
            <person name="Riley M."/>
        </authorList>
    </citation>
    <scope>NUCLEOTIDE SEQUENCE [LARGE SCALE GENOMIC DNA]</scope>
    <source>
        <strain>DSM 17167 / CIP 108236 / LMG 21445 / STM815</strain>
    </source>
</reference>
<comment type="function">
    <text evidence="1">Catalyzes the hydrolysis of N-succinyl-L,L-diaminopimelic acid (SDAP), forming succinate and LL-2,6-diaminopimelate (DAP), an intermediate involved in the bacterial biosynthesis of lysine and meso-diaminopimelic acid, an essential component of bacterial cell walls.</text>
</comment>
<comment type="catalytic activity">
    <reaction evidence="1">
        <text>N-succinyl-(2S,6S)-2,6-diaminopimelate + H2O = (2S,6S)-2,6-diaminopimelate + succinate</text>
        <dbReference type="Rhea" id="RHEA:22608"/>
        <dbReference type="ChEBI" id="CHEBI:15377"/>
        <dbReference type="ChEBI" id="CHEBI:30031"/>
        <dbReference type="ChEBI" id="CHEBI:57609"/>
        <dbReference type="ChEBI" id="CHEBI:58087"/>
        <dbReference type="EC" id="3.5.1.18"/>
    </reaction>
</comment>
<comment type="cofactor">
    <cofactor evidence="1">
        <name>Zn(2+)</name>
        <dbReference type="ChEBI" id="CHEBI:29105"/>
    </cofactor>
    <cofactor evidence="1">
        <name>Co(2+)</name>
        <dbReference type="ChEBI" id="CHEBI:48828"/>
    </cofactor>
    <text evidence="1">Binds 2 Zn(2+) or Co(2+) ions per subunit.</text>
</comment>
<comment type="pathway">
    <text evidence="1">Amino-acid biosynthesis; L-lysine biosynthesis via DAP pathway; LL-2,6-diaminopimelate from (S)-tetrahydrodipicolinate (succinylase route): step 3/3.</text>
</comment>
<comment type="subunit">
    <text evidence="1">Homodimer.</text>
</comment>
<comment type="similarity">
    <text evidence="1">Belongs to the peptidase M20A family. DapE subfamily.</text>
</comment>
<keyword id="KW-0028">Amino-acid biosynthesis</keyword>
<keyword id="KW-0170">Cobalt</keyword>
<keyword id="KW-0220">Diaminopimelate biosynthesis</keyword>
<keyword id="KW-0378">Hydrolase</keyword>
<keyword id="KW-0457">Lysine biosynthesis</keyword>
<keyword id="KW-0479">Metal-binding</keyword>
<keyword id="KW-1185">Reference proteome</keyword>
<keyword id="KW-0862">Zinc</keyword>
<accession>B2JID9</accession>
<organism>
    <name type="scientific">Paraburkholderia phymatum (strain DSM 17167 / CIP 108236 / LMG 21445 / STM815)</name>
    <name type="common">Burkholderia phymatum</name>
    <dbReference type="NCBI Taxonomy" id="391038"/>
    <lineage>
        <taxon>Bacteria</taxon>
        <taxon>Pseudomonadati</taxon>
        <taxon>Pseudomonadota</taxon>
        <taxon>Betaproteobacteria</taxon>
        <taxon>Burkholderiales</taxon>
        <taxon>Burkholderiaceae</taxon>
        <taxon>Paraburkholderia</taxon>
    </lineage>
</organism>
<dbReference type="EC" id="3.5.1.18" evidence="1"/>
<dbReference type="EMBL" id="CP001043">
    <property type="protein sequence ID" value="ACC70533.1"/>
    <property type="molecule type" value="Genomic_DNA"/>
</dbReference>
<dbReference type="RefSeq" id="WP_012400747.1">
    <property type="nucleotide sequence ID" value="NC_010622.1"/>
</dbReference>
<dbReference type="SMR" id="B2JID9"/>
<dbReference type="STRING" id="391038.Bphy_1351"/>
<dbReference type="KEGG" id="bph:Bphy_1351"/>
<dbReference type="eggNOG" id="COG0624">
    <property type="taxonomic scope" value="Bacteria"/>
</dbReference>
<dbReference type="HOGENOM" id="CLU_021802_4_0_4"/>
<dbReference type="OrthoDB" id="9809784at2"/>
<dbReference type="UniPathway" id="UPA00034">
    <property type="reaction ID" value="UER00021"/>
</dbReference>
<dbReference type="Proteomes" id="UP000001192">
    <property type="component" value="Chromosome 1"/>
</dbReference>
<dbReference type="GO" id="GO:0008777">
    <property type="term" value="F:acetylornithine deacetylase activity"/>
    <property type="evidence" value="ECO:0007669"/>
    <property type="project" value="TreeGrafter"/>
</dbReference>
<dbReference type="GO" id="GO:0050897">
    <property type="term" value="F:cobalt ion binding"/>
    <property type="evidence" value="ECO:0007669"/>
    <property type="project" value="UniProtKB-UniRule"/>
</dbReference>
<dbReference type="GO" id="GO:0009014">
    <property type="term" value="F:succinyl-diaminopimelate desuccinylase activity"/>
    <property type="evidence" value="ECO:0007669"/>
    <property type="project" value="UniProtKB-UniRule"/>
</dbReference>
<dbReference type="GO" id="GO:0008270">
    <property type="term" value="F:zinc ion binding"/>
    <property type="evidence" value="ECO:0007669"/>
    <property type="project" value="UniProtKB-UniRule"/>
</dbReference>
<dbReference type="GO" id="GO:0019877">
    <property type="term" value="P:diaminopimelate biosynthetic process"/>
    <property type="evidence" value="ECO:0007669"/>
    <property type="project" value="UniProtKB-UniRule"/>
</dbReference>
<dbReference type="GO" id="GO:0006526">
    <property type="term" value="P:L-arginine biosynthetic process"/>
    <property type="evidence" value="ECO:0007669"/>
    <property type="project" value="TreeGrafter"/>
</dbReference>
<dbReference type="GO" id="GO:0009089">
    <property type="term" value="P:lysine biosynthetic process via diaminopimelate"/>
    <property type="evidence" value="ECO:0007669"/>
    <property type="project" value="UniProtKB-UniRule"/>
</dbReference>
<dbReference type="CDD" id="cd03891">
    <property type="entry name" value="M20_DapE_proteobac"/>
    <property type="match status" value="1"/>
</dbReference>
<dbReference type="FunFam" id="3.30.70.360:FF:000011">
    <property type="entry name" value="Succinyl-diaminopimelate desuccinylase"/>
    <property type="match status" value="1"/>
</dbReference>
<dbReference type="FunFam" id="3.40.630.10:FF:000005">
    <property type="entry name" value="Succinyl-diaminopimelate desuccinylase"/>
    <property type="match status" value="1"/>
</dbReference>
<dbReference type="Gene3D" id="1.10.150.900">
    <property type="match status" value="1"/>
</dbReference>
<dbReference type="Gene3D" id="3.30.70.360">
    <property type="match status" value="1"/>
</dbReference>
<dbReference type="Gene3D" id="3.40.630.10">
    <property type="entry name" value="Zn peptidases"/>
    <property type="match status" value="1"/>
</dbReference>
<dbReference type="HAMAP" id="MF_01690">
    <property type="entry name" value="DapE"/>
    <property type="match status" value="1"/>
</dbReference>
<dbReference type="InterPro" id="IPR001261">
    <property type="entry name" value="ArgE/DapE_CS"/>
</dbReference>
<dbReference type="InterPro" id="IPR036264">
    <property type="entry name" value="Bact_exopeptidase_dim_dom"/>
</dbReference>
<dbReference type="InterPro" id="IPR005941">
    <property type="entry name" value="DapE_proteobac"/>
</dbReference>
<dbReference type="InterPro" id="IPR002933">
    <property type="entry name" value="Peptidase_M20"/>
</dbReference>
<dbReference type="InterPro" id="IPR011650">
    <property type="entry name" value="Peptidase_M20_dimer"/>
</dbReference>
<dbReference type="InterPro" id="IPR050072">
    <property type="entry name" value="Peptidase_M20A"/>
</dbReference>
<dbReference type="NCBIfam" id="TIGR01246">
    <property type="entry name" value="dapE_proteo"/>
    <property type="match status" value="1"/>
</dbReference>
<dbReference type="NCBIfam" id="NF009557">
    <property type="entry name" value="PRK13009.1"/>
    <property type="match status" value="1"/>
</dbReference>
<dbReference type="PANTHER" id="PTHR43808">
    <property type="entry name" value="ACETYLORNITHINE DEACETYLASE"/>
    <property type="match status" value="1"/>
</dbReference>
<dbReference type="PANTHER" id="PTHR43808:SF31">
    <property type="entry name" value="N-ACETYL-L-CITRULLINE DEACETYLASE"/>
    <property type="match status" value="1"/>
</dbReference>
<dbReference type="Pfam" id="PF07687">
    <property type="entry name" value="M20_dimer"/>
    <property type="match status" value="1"/>
</dbReference>
<dbReference type="Pfam" id="PF01546">
    <property type="entry name" value="Peptidase_M20"/>
    <property type="match status" value="1"/>
</dbReference>
<dbReference type="SUPFAM" id="SSF55031">
    <property type="entry name" value="Bacterial exopeptidase dimerisation domain"/>
    <property type="match status" value="1"/>
</dbReference>
<dbReference type="SUPFAM" id="SSF53187">
    <property type="entry name" value="Zn-dependent exopeptidases"/>
    <property type="match status" value="1"/>
</dbReference>
<dbReference type="PROSITE" id="PS00758">
    <property type="entry name" value="ARGE_DAPE_CPG2_1"/>
    <property type="match status" value="1"/>
</dbReference>
<dbReference type="PROSITE" id="PS00759">
    <property type="entry name" value="ARGE_DAPE_CPG2_2"/>
    <property type="match status" value="1"/>
</dbReference>
<evidence type="ECO:0000255" key="1">
    <source>
        <dbReference type="HAMAP-Rule" id="MF_01690"/>
    </source>
</evidence>
<protein>
    <recommendedName>
        <fullName evidence="1">Succinyl-diaminopimelate desuccinylase</fullName>
        <shortName evidence="1">SDAP desuccinylase</shortName>
        <ecNumber evidence="1">3.5.1.18</ecNumber>
    </recommendedName>
    <alternativeName>
        <fullName evidence="1">N-succinyl-LL-2,6-diaminoheptanedioate amidohydrolase</fullName>
    </alternativeName>
</protein>
<gene>
    <name evidence="1" type="primary">dapE</name>
    <name type="ordered locus">Bphy_1351</name>
</gene>
<name>DAPE_PARP8</name>
<feature type="chain" id="PRO_0000375506" description="Succinyl-diaminopimelate desuccinylase">
    <location>
        <begin position="1"/>
        <end position="379"/>
    </location>
</feature>
<feature type="active site" evidence="1">
    <location>
        <position position="72"/>
    </location>
</feature>
<feature type="active site" description="Proton acceptor" evidence="1">
    <location>
        <position position="137"/>
    </location>
</feature>
<feature type="binding site" evidence="1">
    <location>
        <position position="70"/>
    </location>
    <ligand>
        <name>Zn(2+)</name>
        <dbReference type="ChEBI" id="CHEBI:29105"/>
        <label>1</label>
    </ligand>
</feature>
<feature type="binding site" evidence="1">
    <location>
        <position position="103"/>
    </location>
    <ligand>
        <name>Zn(2+)</name>
        <dbReference type="ChEBI" id="CHEBI:29105"/>
        <label>1</label>
    </ligand>
</feature>
<feature type="binding site" evidence="1">
    <location>
        <position position="103"/>
    </location>
    <ligand>
        <name>Zn(2+)</name>
        <dbReference type="ChEBI" id="CHEBI:29105"/>
        <label>2</label>
    </ligand>
</feature>
<feature type="binding site" evidence="1">
    <location>
        <position position="138"/>
    </location>
    <ligand>
        <name>Zn(2+)</name>
        <dbReference type="ChEBI" id="CHEBI:29105"/>
        <label>2</label>
    </ligand>
</feature>
<feature type="binding site" evidence="1">
    <location>
        <position position="166"/>
    </location>
    <ligand>
        <name>Zn(2+)</name>
        <dbReference type="ChEBI" id="CHEBI:29105"/>
        <label>1</label>
    </ligand>
</feature>
<feature type="binding site" evidence="1">
    <location>
        <position position="352"/>
    </location>
    <ligand>
        <name>Zn(2+)</name>
        <dbReference type="ChEBI" id="CHEBI:29105"/>
        <label>2</label>
    </ligand>
</feature>